<proteinExistence type="evidence at transcript level"/>
<name>QRFPR_RAT</name>
<evidence type="ECO:0000255" key="1"/>
<evidence type="ECO:0000255" key="2">
    <source>
        <dbReference type="PROSITE-ProRule" id="PRU00521"/>
    </source>
</evidence>
<evidence type="ECO:0000256" key="3">
    <source>
        <dbReference type="SAM" id="MobiDB-lite"/>
    </source>
</evidence>
<evidence type="ECO:0000269" key="4">
    <source>
    </source>
</evidence>
<evidence type="ECO:0000269" key="5">
    <source>
    </source>
</evidence>
<evidence type="ECO:0000305" key="6"/>
<evidence type="ECO:0000312" key="7">
    <source>
        <dbReference type="EMBL" id="BAC98939.1"/>
    </source>
</evidence>
<organism evidence="7">
    <name type="scientific">Rattus norvegicus</name>
    <name type="common">Rat</name>
    <dbReference type="NCBI Taxonomy" id="10116"/>
    <lineage>
        <taxon>Eukaryota</taxon>
        <taxon>Metazoa</taxon>
        <taxon>Chordata</taxon>
        <taxon>Craniata</taxon>
        <taxon>Vertebrata</taxon>
        <taxon>Euteleostomi</taxon>
        <taxon>Mammalia</taxon>
        <taxon>Eutheria</taxon>
        <taxon>Euarchontoglires</taxon>
        <taxon>Glires</taxon>
        <taxon>Rodentia</taxon>
        <taxon>Myomorpha</taxon>
        <taxon>Muroidea</taxon>
        <taxon>Muridae</taxon>
        <taxon>Murinae</taxon>
        <taxon>Rattus</taxon>
    </lineage>
</organism>
<feature type="chain" id="PRO_0000070099" description="Pyroglutamylated RF-amide peptide receptor">
    <location>
        <begin position="1"/>
        <end position="433"/>
    </location>
</feature>
<feature type="topological domain" description="Extracellular" evidence="1">
    <location>
        <begin position="1"/>
        <end position="46"/>
    </location>
</feature>
<feature type="transmembrane region" description="Helical; Name=1" evidence="1">
    <location>
        <begin position="47"/>
        <end position="67"/>
    </location>
</feature>
<feature type="topological domain" description="Cytoplasmic" evidence="1">
    <location>
        <begin position="68"/>
        <end position="81"/>
    </location>
</feature>
<feature type="transmembrane region" description="Helical; Name=2" evidence="1">
    <location>
        <begin position="82"/>
        <end position="102"/>
    </location>
</feature>
<feature type="topological domain" description="Extracellular" evidence="1">
    <location>
        <begin position="103"/>
        <end position="120"/>
    </location>
</feature>
<feature type="transmembrane region" description="Helical; Name=3" evidence="1">
    <location>
        <begin position="121"/>
        <end position="141"/>
    </location>
</feature>
<feature type="topological domain" description="Cytoplasmic" evidence="1">
    <location>
        <begin position="142"/>
        <end position="162"/>
    </location>
</feature>
<feature type="transmembrane region" description="Helical; Name=4" evidence="1">
    <location>
        <begin position="163"/>
        <end position="183"/>
    </location>
</feature>
<feature type="topological domain" description="Extracellular" evidence="1">
    <location>
        <begin position="184"/>
        <end position="212"/>
    </location>
</feature>
<feature type="transmembrane region" description="Helical; Name=5" evidence="1">
    <location>
        <begin position="213"/>
        <end position="233"/>
    </location>
</feature>
<feature type="topological domain" description="Cytoplasmic" evidence="1">
    <location>
        <begin position="234"/>
        <end position="271"/>
    </location>
</feature>
<feature type="transmembrane region" description="Helical; Name=6" evidence="1">
    <location>
        <begin position="272"/>
        <end position="292"/>
    </location>
</feature>
<feature type="topological domain" description="Extracellular" evidence="1">
    <location>
        <begin position="293"/>
        <end position="313"/>
    </location>
</feature>
<feature type="transmembrane region" description="Helical; Name=7" evidence="1">
    <location>
        <begin position="314"/>
        <end position="334"/>
    </location>
</feature>
<feature type="topological domain" description="Cytoplasmic" evidence="1">
    <location>
        <begin position="335"/>
        <end position="433"/>
    </location>
</feature>
<feature type="region of interest" description="Disordered" evidence="3">
    <location>
        <begin position="356"/>
        <end position="389"/>
    </location>
</feature>
<feature type="glycosylation site" description="N-linked (GlcNAc...) asparagine" evidence="1">
    <location>
        <position position="5"/>
    </location>
</feature>
<feature type="glycosylation site" description="N-linked (GlcNAc...) asparagine" evidence="1">
    <location>
        <position position="19"/>
    </location>
</feature>
<accession>P83858</accession>
<sequence>MQALNITAEQFSRLLSAHNLTREQFIHRYGLRPLVYTPELPARAKVAFALAGALIFALALFGNSLVIYVVTRSKAMRTVTNIFICSLALSDLLIAFFCIPVTMLQNISDKWLGGAFICKMVPFVQSTAVVTEILTMTCIAVERHQGLVHPFKMKWQYTTRRAFTILGVVWLAAIIVGSPMWHVQRLEIKYDFLYEKEHICCLEEWASPVHQRIYSTFILVILFLLPLVVMLVLYSKIGYELWIKKRVGDSSALQTIHGKEMSKIARKKKRAVIMMVTVVALFAACWAPFHVVHMMVEYSNFEKEYDDVTIKMVFAVAQTIGFFNSICNPFVYAFMNENFKKNFLSAVCYCIVKESSSPARKPGNSGISMMQKRAKLSRPQRPVEETKGDTFSDASIDVKLCEQPREKRQLKRQLAFFSSELSENSTFGSGHEL</sequence>
<reference evidence="6" key="1">
    <citation type="journal article" date="2003" name="J. Biol. Chem.">
        <title>Identification and characterization of a novel RF-amide peptide ligand for orphan G-protein-coupled receptor SP9155.</title>
        <authorList>
            <person name="Jiang Y."/>
            <person name="Luo L."/>
            <person name="Gustafson E.L."/>
            <person name="Yadav D."/>
            <person name="Laverty M."/>
            <person name="Murgolo N."/>
            <person name="Vassileva G."/>
            <person name="Zeng M."/>
            <person name="Laz T.M."/>
            <person name="Behan J."/>
            <person name="Qiu P."/>
            <person name="Wang L."/>
            <person name="Wang S."/>
            <person name="Bayne M."/>
            <person name="Greene J."/>
            <person name="Monsma F.J. Jr."/>
            <person name="Zhang F.L."/>
        </authorList>
    </citation>
    <scope>NUCLEOTIDE SEQUENCE [MRNA]</scope>
</reference>
<reference evidence="6" key="2">
    <citation type="journal article" date="2003" name="J. Biol. Chem.">
        <title>A new peptidic ligand and its receptor regulating adrenal function in rats.</title>
        <authorList>
            <person name="Fukusumi S."/>
            <person name="Yoshida H."/>
            <person name="Fujii R."/>
            <person name="Maruyama M."/>
            <person name="Komatsu H."/>
            <person name="Habata Y."/>
            <person name="Shintani Y."/>
            <person name="Hinuma S."/>
            <person name="Fujino M."/>
        </authorList>
    </citation>
    <scope>NUCLEOTIDE SEQUENCE [MRNA]</scope>
    <scope>TISSUE SPECIFICITY</scope>
    <source>
        <tissue evidence="4">Brain</tissue>
    </source>
</reference>
<reference key="3">
    <citation type="journal article" date="2006" name="Proc. Natl. Acad. Sci. U.S.A.">
        <title>A neuropeptide ligand of the G protein-coupled receptor GPR103 regulates feeding, behavioral arousal, and blood pressure in mice.</title>
        <authorList>
            <person name="Takayasu S."/>
            <person name="Sakurai T."/>
            <person name="Iwasaki S."/>
            <person name="Teranishi H."/>
            <person name="Yamanaka A."/>
            <person name="Williams S.C."/>
            <person name="Iguchi H."/>
            <person name="Kawasawa Y.I."/>
            <person name="Ikeda Y."/>
            <person name="Sakakibara I."/>
            <person name="Ohno K."/>
            <person name="Ioka R.X."/>
            <person name="Murakami S."/>
            <person name="Dohmae N."/>
            <person name="Xie J."/>
            <person name="Suda T."/>
            <person name="Motoike T."/>
            <person name="Ohuchi T."/>
            <person name="Yanagisawa M."/>
            <person name="Sakai J."/>
        </authorList>
    </citation>
    <scope>FUNCTION</scope>
</reference>
<keyword id="KW-1003">Cell membrane</keyword>
<keyword id="KW-0297">G-protein coupled receptor</keyword>
<keyword id="KW-0325">Glycoprotein</keyword>
<keyword id="KW-0472">Membrane</keyword>
<keyword id="KW-0675">Receptor</keyword>
<keyword id="KW-1185">Reference proteome</keyword>
<keyword id="KW-0807">Transducer</keyword>
<keyword id="KW-0812">Transmembrane</keyword>
<keyword id="KW-1133">Transmembrane helix</keyword>
<protein>
    <recommendedName>
        <fullName>Pyroglutamylated RF-amide peptide receptor</fullName>
    </recommendedName>
    <alternativeName>
        <fullName>AQ27</fullName>
    </alternativeName>
    <alternativeName>
        <fullName>G-protein coupled receptor 103</fullName>
    </alternativeName>
    <alternativeName>
        <fullName>Orexigenic neuropeptide QRFP receptor</fullName>
    </alternativeName>
    <alternativeName>
        <fullName>SP9155</fullName>
    </alternativeName>
</protein>
<gene>
    <name type="primary">Qrfpr</name>
    <name type="synonym">Gpr103</name>
</gene>
<dbReference type="EMBL" id="AB109630">
    <property type="protein sequence ID" value="BAC98939.1"/>
    <property type="molecule type" value="mRNA"/>
</dbReference>
<dbReference type="RefSeq" id="NP_937842.1">
    <property type="nucleotide sequence ID" value="NM_198199.2"/>
</dbReference>
<dbReference type="SMR" id="P83858"/>
<dbReference type="FunCoup" id="P83858">
    <property type="interactions" value="182"/>
</dbReference>
<dbReference type="STRING" id="10116.ENSRNOP00000035152"/>
<dbReference type="ChEMBL" id="CHEMBL1949484"/>
<dbReference type="GuidetoPHARMACOLOGY" id="333"/>
<dbReference type="GlyCosmos" id="P83858">
    <property type="glycosylation" value="2 sites, No reported glycans"/>
</dbReference>
<dbReference type="GlyGen" id="P83858">
    <property type="glycosylation" value="2 sites"/>
</dbReference>
<dbReference type="PhosphoSitePlus" id="P83858"/>
<dbReference type="PaxDb" id="10116-ENSRNOP00000035152"/>
<dbReference type="Ensembl" id="ENSRNOT00000039615.3">
    <property type="protein sequence ID" value="ENSRNOP00000035152.2"/>
    <property type="gene ID" value="ENSRNOG00000014414.7"/>
</dbReference>
<dbReference type="GeneID" id="310327"/>
<dbReference type="KEGG" id="rno:310327"/>
<dbReference type="UCSC" id="RGD:728380">
    <property type="organism name" value="rat"/>
</dbReference>
<dbReference type="AGR" id="RGD:728380"/>
<dbReference type="CTD" id="84109"/>
<dbReference type="RGD" id="728380">
    <property type="gene designation" value="Qrfpr"/>
</dbReference>
<dbReference type="eggNOG" id="ENOG502QW2F">
    <property type="taxonomic scope" value="Eukaryota"/>
</dbReference>
<dbReference type="GeneTree" id="ENSGT01130000278294"/>
<dbReference type="HOGENOM" id="CLU_009579_6_0_1"/>
<dbReference type="InParanoid" id="P83858"/>
<dbReference type="OMA" id="IHMMIEY"/>
<dbReference type="OrthoDB" id="9979846at2759"/>
<dbReference type="PhylomeDB" id="P83858"/>
<dbReference type="TreeFam" id="TF315303"/>
<dbReference type="PRO" id="PR:P83858"/>
<dbReference type="Proteomes" id="UP000002494">
    <property type="component" value="Chromosome 2"/>
</dbReference>
<dbReference type="Bgee" id="ENSRNOG00000014414">
    <property type="expression patterns" value="Expressed in frontal cortex and 6 other cell types or tissues"/>
</dbReference>
<dbReference type="GO" id="GO:0097730">
    <property type="term" value="C:non-motile cilium"/>
    <property type="evidence" value="ECO:0000266"/>
    <property type="project" value="RGD"/>
</dbReference>
<dbReference type="GO" id="GO:0005886">
    <property type="term" value="C:plasma membrane"/>
    <property type="evidence" value="ECO:0000318"/>
    <property type="project" value="GO_Central"/>
</dbReference>
<dbReference type="GO" id="GO:0004930">
    <property type="term" value="F:G protein-coupled receptor activity"/>
    <property type="evidence" value="ECO:0000250"/>
    <property type="project" value="UniProtKB"/>
</dbReference>
<dbReference type="GO" id="GO:0004983">
    <property type="term" value="F:neuropeptide Y receptor activity"/>
    <property type="evidence" value="ECO:0007669"/>
    <property type="project" value="InterPro"/>
</dbReference>
<dbReference type="GO" id="GO:0032870">
    <property type="term" value="P:cellular response to hormone stimulus"/>
    <property type="evidence" value="ECO:0000318"/>
    <property type="project" value="GO_Central"/>
</dbReference>
<dbReference type="GO" id="GO:0007186">
    <property type="term" value="P:G protein-coupled receptor signaling pathway"/>
    <property type="evidence" value="ECO:0000250"/>
    <property type="project" value="UniProtKB"/>
</dbReference>
<dbReference type="CDD" id="cd15205">
    <property type="entry name" value="7tmA_QRFPR"/>
    <property type="match status" value="1"/>
</dbReference>
<dbReference type="FunFam" id="1.20.1070.10:FF:000227">
    <property type="entry name" value="Pyroglutamylated RFamide peptide receptor a"/>
    <property type="match status" value="1"/>
</dbReference>
<dbReference type="Gene3D" id="1.20.1070.10">
    <property type="entry name" value="Rhodopsin 7-helix transmembrane proteins"/>
    <property type="match status" value="1"/>
</dbReference>
<dbReference type="InterPro" id="IPR000276">
    <property type="entry name" value="GPCR_Rhodpsn"/>
</dbReference>
<dbReference type="InterPro" id="IPR017452">
    <property type="entry name" value="GPCR_Rhodpsn_7TM"/>
</dbReference>
<dbReference type="InterPro" id="IPR000611">
    <property type="entry name" value="NPY_rcpt"/>
</dbReference>
<dbReference type="PANTHER" id="PTHR45695">
    <property type="entry name" value="LEUCOKININ RECEPTOR-RELATED"/>
    <property type="match status" value="1"/>
</dbReference>
<dbReference type="PANTHER" id="PTHR45695:SF20">
    <property type="entry name" value="PYROGLUTAMYLATED RFAMIDE PEPTIDE RECEPTOR"/>
    <property type="match status" value="1"/>
</dbReference>
<dbReference type="Pfam" id="PF00001">
    <property type="entry name" value="7tm_1"/>
    <property type="match status" value="1"/>
</dbReference>
<dbReference type="PRINTS" id="PR00237">
    <property type="entry name" value="GPCRRHODOPSN"/>
</dbReference>
<dbReference type="PRINTS" id="PR01012">
    <property type="entry name" value="NRPEPTIDEYR"/>
</dbReference>
<dbReference type="SUPFAM" id="SSF81321">
    <property type="entry name" value="Family A G protein-coupled receptor-like"/>
    <property type="match status" value="1"/>
</dbReference>
<dbReference type="PROSITE" id="PS00237">
    <property type="entry name" value="G_PROTEIN_RECEP_F1_1"/>
    <property type="match status" value="1"/>
</dbReference>
<dbReference type="PROSITE" id="PS50262">
    <property type="entry name" value="G_PROTEIN_RECEP_F1_2"/>
    <property type="match status" value="1"/>
</dbReference>
<comment type="function">
    <text evidence="5">Receptor for the orexigenic neuropeptide QRFP. The activity of this receptor is mediated by G proteins that modulate adenylate cyclase activity and intracellular calcium levels.</text>
</comment>
<comment type="subcellular location">
    <subcellularLocation>
        <location>Cell membrane</location>
        <topology>Multi-pass membrane protein</topology>
    </subcellularLocation>
</comment>
<comment type="tissue specificity">
    <text evidence="4">Highly expressed in the adrenal gland and at moderate levels in the eye and testis. Expressed widely in the brain with high levels in the hypothalamus and moderate levels in the amygdala, basal forebrain, cortex, medulla oblongata, midbrain and thalamus.</text>
</comment>
<comment type="similarity">
    <text evidence="2">Belongs to the G-protein coupled receptor 1 family.</text>
</comment>